<accession>B7V5B5</accession>
<protein>
    <recommendedName>
        <fullName evidence="1">UPF0149 protein PLES_56191</fullName>
    </recommendedName>
</protein>
<sequence>MSTQNSAYSAFSSLLAEAAMPVSPAELHGHLLGRVCAGAGFDEAAWQHAAAELLGGAPGERLKAALSGLLGMVRQDFSAGEVAVVMLLPDDETPLAQRTEALGQWCQGFLAGFGLTAREGSLTGEAEEVLQDMAAIAQVQGQLEDSEDGETDYMEVMEYLRVAPLLLFAECGKPLEPAPKPSLH</sequence>
<evidence type="ECO:0000255" key="1">
    <source>
        <dbReference type="HAMAP-Rule" id="MF_00346"/>
    </source>
</evidence>
<reference key="1">
    <citation type="journal article" date="2009" name="Genome Res.">
        <title>Newly introduced genomic prophage islands are critical determinants of in vivo competitiveness in the Liverpool epidemic strain of Pseudomonas aeruginosa.</title>
        <authorList>
            <person name="Winstanley C."/>
            <person name="Langille M.G.I."/>
            <person name="Fothergill J.L."/>
            <person name="Kukavica-Ibrulj I."/>
            <person name="Paradis-Bleau C."/>
            <person name="Sanschagrin F."/>
            <person name="Thomson N.R."/>
            <person name="Winsor G.L."/>
            <person name="Quail M.A."/>
            <person name="Lennard N."/>
            <person name="Bignell A."/>
            <person name="Clarke L."/>
            <person name="Seeger K."/>
            <person name="Saunders D."/>
            <person name="Harris D."/>
            <person name="Parkhill J."/>
            <person name="Hancock R.E.W."/>
            <person name="Brinkman F.S.L."/>
            <person name="Levesque R.C."/>
        </authorList>
    </citation>
    <scope>NUCLEOTIDE SEQUENCE [LARGE SCALE GENOMIC DNA]</scope>
    <source>
        <strain>LESB58</strain>
    </source>
</reference>
<dbReference type="EMBL" id="FM209186">
    <property type="protein sequence ID" value="CAW30373.1"/>
    <property type="molecule type" value="Genomic_DNA"/>
</dbReference>
<dbReference type="RefSeq" id="WP_003099193.1">
    <property type="nucleotide sequence ID" value="NC_011770.1"/>
</dbReference>
<dbReference type="SMR" id="B7V5B5"/>
<dbReference type="KEGG" id="pag:PLES_56191"/>
<dbReference type="HOGENOM" id="CLU_085336_0_0_6"/>
<dbReference type="GO" id="GO:0005829">
    <property type="term" value="C:cytosol"/>
    <property type="evidence" value="ECO:0007669"/>
    <property type="project" value="TreeGrafter"/>
</dbReference>
<dbReference type="FunFam" id="1.20.120.740:FF:000003">
    <property type="entry name" value="UPF0149 protein PLES_56191"/>
    <property type="match status" value="1"/>
</dbReference>
<dbReference type="Gene3D" id="1.20.120.740">
    <property type="entry name" value="YgfB uncharacterised protein family UPF0149, PF03695"/>
    <property type="match status" value="1"/>
</dbReference>
<dbReference type="HAMAP" id="MF_00346">
    <property type="entry name" value="UPF0149"/>
    <property type="match status" value="1"/>
</dbReference>
<dbReference type="InterPro" id="IPR011978">
    <property type="entry name" value="YgfB-like"/>
</dbReference>
<dbReference type="InterPro" id="IPR036255">
    <property type="entry name" value="YgfB-like_sf"/>
</dbReference>
<dbReference type="NCBIfam" id="NF002562">
    <property type="entry name" value="PRK02166.1"/>
    <property type="match status" value="1"/>
</dbReference>
<dbReference type="PANTHER" id="PTHR37528">
    <property type="entry name" value="UPF0149 PROTEIN YGFB"/>
    <property type="match status" value="1"/>
</dbReference>
<dbReference type="PANTHER" id="PTHR37528:SF1">
    <property type="entry name" value="UPF0149 PROTEIN YGFB"/>
    <property type="match status" value="1"/>
</dbReference>
<dbReference type="Pfam" id="PF03695">
    <property type="entry name" value="UPF0149"/>
    <property type="match status" value="1"/>
</dbReference>
<dbReference type="SUPFAM" id="SSF101327">
    <property type="entry name" value="YgfB-like"/>
    <property type="match status" value="1"/>
</dbReference>
<comment type="similarity">
    <text evidence="1">Belongs to the UPF0149 family.</text>
</comment>
<name>Y5619_PSEA8</name>
<organism>
    <name type="scientific">Pseudomonas aeruginosa (strain LESB58)</name>
    <dbReference type="NCBI Taxonomy" id="557722"/>
    <lineage>
        <taxon>Bacteria</taxon>
        <taxon>Pseudomonadati</taxon>
        <taxon>Pseudomonadota</taxon>
        <taxon>Gammaproteobacteria</taxon>
        <taxon>Pseudomonadales</taxon>
        <taxon>Pseudomonadaceae</taxon>
        <taxon>Pseudomonas</taxon>
    </lineage>
</organism>
<feature type="chain" id="PRO_1000120476" description="UPF0149 protein PLES_56191">
    <location>
        <begin position="1"/>
        <end position="184"/>
    </location>
</feature>
<gene>
    <name type="ordered locus">PLES_56191</name>
</gene>
<proteinExistence type="inferred from homology"/>